<organism>
    <name type="scientific">Buchnera aphidicola subsp. Acyrthosiphon pisum (strain Tuc7)</name>
    <dbReference type="NCBI Taxonomy" id="561501"/>
    <lineage>
        <taxon>Bacteria</taxon>
        <taxon>Pseudomonadati</taxon>
        <taxon>Pseudomonadota</taxon>
        <taxon>Gammaproteobacteria</taxon>
        <taxon>Enterobacterales</taxon>
        <taxon>Erwiniaceae</taxon>
        <taxon>Buchnera</taxon>
    </lineage>
</organism>
<protein>
    <recommendedName>
        <fullName evidence="1">Fe/S biogenesis protein NfuA</fullName>
    </recommendedName>
</protein>
<gene>
    <name evidence="1" type="primary">nfuA</name>
    <name type="ordered locus">BUAPTUC7_538</name>
</gene>
<sequence>MINISKKAQEHFTSLLSNEPENTQIRVFIVNPGTPNAECGVAFCPENEIELSDIQLKYDGFFVYVNKDTISYLKNSVIDLVTDKIGSQLTLKAPYAKNNFSKKVSSSLEEKVKCFLNLEINPQLSMHGGRVELIKIDKNGIAAIQFSGGCNGCSMIGSTLKETVEKKLLSSFSEIKKVYDETHHLHGQHSFY</sequence>
<dbReference type="EMBL" id="CP001158">
    <property type="protein sequence ID" value="ACL30333.1"/>
    <property type="molecule type" value="Genomic_DNA"/>
</dbReference>
<dbReference type="RefSeq" id="WP_010896157.1">
    <property type="nucleotide sequence ID" value="NC_011834.1"/>
</dbReference>
<dbReference type="SMR" id="B8D868"/>
<dbReference type="KEGG" id="bau:BUAPTUC7_538"/>
<dbReference type="HOGENOM" id="CLU_094569_0_0_6"/>
<dbReference type="GO" id="GO:0051539">
    <property type="term" value="F:4 iron, 4 sulfur cluster binding"/>
    <property type="evidence" value="ECO:0007669"/>
    <property type="project" value="UniProtKB-UniRule"/>
</dbReference>
<dbReference type="GO" id="GO:0005506">
    <property type="term" value="F:iron ion binding"/>
    <property type="evidence" value="ECO:0007669"/>
    <property type="project" value="InterPro"/>
</dbReference>
<dbReference type="GO" id="GO:0016226">
    <property type="term" value="P:iron-sulfur cluster assembly"/>
    <property type="evidence" value="ECO:0007669"/>
    <property type="project" value="UniProtKB-UniRule"/>
</dbReference>
<dbReference type="GO" id="GO:0051604">
    <property type="term" value="P:protein maturation"/>
    <property type="evidence" value="ECO:0007669"/>
    <property type="project" value="UniProtKB-UniRule"/>
</dbReference>
<dbReference type="Gene3D" id="3.30.300.130">
    <property type="entry name" value="Fe-S cluster assembly (FSCA)"/>
    <property type="match status" value="1"/>
</dbReference>
<dbReference type="Gene3D" id="2.60.300.12">
    <property type="entry name" value="HesB-like domain"/>
    <property type="match status" value="1"/>
</dbReference>
<dbReference type="HAMAP" id="MF_01637">
    <property type="entry name" value="Fe_S_biogen_NfuA"/>
    <property type="match status" value="1"/>
</dbReference>
<dbReference type="InterPro" id="IPR017726">
    <property type="entry name" value="Fe/S_biogenesis_protein_NfuA"/>
</dbReference>
<dbReference type="InterPro" id="IPR000361">
    <property type="entry name" value="FeS_biogenesis"/>
</dbReference>
<dbReference type="InterPro" id="IPR034904">
    <property type="entry name" value="FSCA_dom_sf"/>
</dbReference>
<dbReference type="InterPro" id="IPR035903">
    <property type="entry name" value="HesB-like_dom_sf"/>
</dbReference>
<dbReference type="InterPro" id="IPR001075">
    <property type="entry name" value="NIF_FeS_clus_asmbl_NifU_C"/>
</dbReference>
<dbReference type="Pfam" id="PF01521">
    <property type="entry name" value="Fe-S_biosyn"/>
    <property type="match status" value="1"/>
</dbReference>
<dbReference type="Pfam" id="PF01106">
    <property type="entry name" value="NifU"/>
    <property type="match status" value="1"/>
</dbReference>
<dbReference type="SUPFAM" id="SSF117916">
    <property type="entry name" value="Fe-S cluster assembly (FSCA) domain-like"/>
    <property type="match status" value="1"/>
</dbReference>
<dbReference type="SUPFAM" id="SSF89360">
    <property type="entry name" value="HesB-like domain"/>
    <property type="match status" value="1"/>
</dbReference>
<comment type="function">
    <text evidence="1">Involved in iron-sulfur cluster biogenesis. Binds a 4Fe-4S cluster, can transfer this cluster to apoproteins, and thereby intervenes in the maturation of Fe/S proteins. Could also act as a scaffold/chaperone for damaged Fe/S proteins.</text>
</comment>
<comment type="cofactor">
    <cofactor evidence="1">
        <name>[4Fe-4S] cluster</name>
        <dbReference type="ChEBI" id="CHEBI:49883"/>
    </cofactor>
    <text evidence="1">Binds 1 [4Fe-4S] cluster per subunit. The cluster is presumably bound at the interface of two monomers.</text>
</comment>
<comment type="subunit">
    <text evidence="1">Homodimer.</text>
</comment>
<comment type="similarity">
    <text evidence="1">Belongs to the NfuA family.</text>
</comment>
<evidence type="ECO:0000255" key="1">
    <source>
        <dbReference type="HAMAP-Rule" id="MF_01637"/>
    </source>
</evidence>
<feature type="chain" id="PRO_1000186740" description="Fe/S biogenesis protein NfuA">
    <location>
        <begin position="1"/>
        <end position="192"/>
    </location>
</feature>
<feature type="binding site" evidence="1">
    <location>
        <position position="150"/>
    </location>
    <ligand>
        <name>[4Fe-4S] cluster</name>
        <dbReference type="ChEBI" id="CHEBI:49883"/>
    </ligand>
</feature>
<feature type="binding site" evidence="1">
    <location>
        <position position="153"/>
    </location>
    <ligand>
        <name>[4Fe-4S] cluster</name>
        <dbReference type="ChEBI" id="CHEBI:49883"/>
    </ligand>
</feature>
<reference key="1">
    <citation type="journal article" date="2009" name="Science">
        <title>The dynamics and time scale of ongoing genomic erosion in symbiotic bacteria.</title>
        <authorList>
            <person name="Moran N.A."/>
            <person name="McLaughlin H.J."/>
            <person name="Sorek R."/>
        </authorList>
    </citation>
    <scope>NUCLEOTIDE SEQUENCE [LARGE SCALE GENOMIC DNA]</scope>
    <source>
        <strain>Tuc7</strain>
    </source>
</reference>
<proteinExistence type="inferred from homology"/>
<keyword id="KW-0004">4Fe-4S</keyword>
<keyword id="KW-0408">Iron</keyword>
<keyword id="KW-0411">Iron-sulfur</keyword>
<keyword id="KW-0479">Metal-binding</keyword>
<accession>B8D868</accession>
<name>NFUA_BUCAT</name>